<evidence type="ECO:0000255" key="1">
    <source>
        <dbReference type="HAMAP-Rule" id="MF_00523"/>
    </source>
</evidence>
<feature type="chain" id="PRO_0000264406" description="UDP-3-O-acylglucosamine N-acyltransferase">
    <location>
        <begin position="1"/>
        <end position="345"/>
    </location>
</feature>
<feature type="active site" description="Proton acceptor" evidence="1">
    <location>
        <position position="248"/>
    </location>
</feature>
<keyword id="KW-0012">Acyltransferase</keyword>
<keyword id="KW-0441">Lipid A biosynthesis</keyword>
<keyword id="KW-0444">Lipid biosynthesis</keyword>
<keyword id="KW-0443">Lipid metabolism</keyword>
<keyword id="KW-1185">Reference proteome</keyword>
<keyword id="KW-0677">Repeat</keyword>
<keyword id="KW-0808">Transferase</keyword>
<proteinExistence type="inferred from homology"/>
<reference key="1">
    <citation type="journal article" date="2003" name="Proc. Natl. Acad. Sci. U.S.A.">
        <title>Genome sequence of the cyanobacterium Prochlorococcus marinus SS120, a nearly minimal oxyphototrophic genome.</title>
        <authorList>
            <person name="Dufresne A."/>
            <person name="Salanoubat M."/>
            <person name="Partensky F."/>
            <person name="Artiguenave F."/>
            <person name="Axmann I.M."/>
            <person name="Barbe V."/>
            <person name="Duprat S."/>
            <person name="Galperin M.Y."/>
            <person name="Koonin E.V."/>
            <person name="Le Gall F."/>
            <person name="Makarova K.S."/>
            <person name="Ostrowski M."/>
            <person name="Oztas S."/>
            <person name="Robert C."/>
            <person name="Rogozin I.B."/>
            <person name="Scanlan D.J."/>
            <person name="Tandeau de Marsac N."/>
            <person name="Weissenbach J."/>
            <person name="Wincker P."/>
            <person name="Wolf Y.I."/>
            <person name="Hess W.R."/>
        </authorList>
    </citation>
    <scope>NUCLEOTIDE SEQUENCE [LARGE SCALE GENOMIC DNA]</scope>
    <source>
        <strain>SARG / CCMP1375 / SS120</strain>
    </source>
</reference>
<protein>
    <recommendedName>
        <fullName evidence="1">UDP-3-O-acylglucosamine N-acyltransferase</fullName>
        <ecNumber evidence="1">2.3.1.191</ecNumber>
    </recommendedName>
</protein>
<accession>Q7VC79</accession>
<dbReference type="EC" id="2.3.1.191" evidence="1"/>
<dbReference type="EMBL" id="AE017126">
    <property type="protein sequence ID" value="AAP99907.1"/>
    <property type="molecule type" value="Genomic_DNA"/>
</dbReference>
<dbReference type="RefSeq" id="NP_875255.1">
    <property type="nucleotide sequence ID" value="NC_005042.1"/>
</dbReference>
<dbReference type="RefSeq" id="WP_011125015.1">
    <property type="nucleotide sequence ID" value="NC_005042.1"/>
</dbReference>
<dbReference type="SMR" id="Q7VC79"/>
<dbReference type="STRING" id="167539.Pro_0863"/>
<dbReference type="EnsemblBacteria" id="AAP99907">
    <property type="protein sequence ID" value="AAP99907"/>
    <property type="gene ID" value="Pro_0863"/>
</dbReference>
<dbReference type="KEGG" id="pma:Pro_0863"/>
<dbReference type="PATRIC" id="fig|167539.5.peg.912"/>
<dbReference type="eggNOG" id="COG1044">
    <property type="taxonomic scope" value="Bacteria"/>
</dbReference>
<dbReference type="HOGENOM" id="CLU_049865_0_0_3"/>
<dbReference type="OrthoDB" id="9784739at2"/>
<dbReference type="UniPathway" id="UPA00973"/>
<dbReference type="Proteomes" id="UP000001420">
    <property type="component" value="Chromosome"/>
</dbReference>
<dbReference type="GO" id="GO:0031470">
    <property type="term" value="C:carboxysome"/>
    <property type="evidence" value="ECO:0007669"/>
    <property type="project" value="UniProtKB-ARBA"/>
</dbReference>
<dbReference type="GO" id="GO:0016020">
    <property type="term" value="C:membrane"/>
    <property type="evidence" value="ECO:0007669"/>
    <property type="project" value="GOC"/>
</dbReference>
<dbReference type="GO" id="GO:0016410">
    <property type="term" value="F:N-acyltransferase activity"/>
    <property type="evidence" value="ECO:0007669"/>
    <property type="project" value="InterPro"/>
</dbReference>
<dbReference type="GO" id="GO:0043886">
    <property type="term" value="F:structural constituent of carboxysome shell"/>
    <property type="evidence" value="ECO:0007669"/>
    <property type="project" value="UniProtKB-ARBA"/>
</dbReference>
<dbReference type="GO" id="GO:0009245">
    <property type="term" value="P:lipid A biosynthetic process"/>
    <property type="evidence" value="ECO:0007669"/>
    <property type="project" value="UniProtKB-UniRule"/>
</dbReference>
<dbReference type="CDD" id="cd03352">
    <property type="entry name" value="LbH_LpxD"/>
    <property type="match status" value="1"/>
</dbReference>
<dbReference type="Gene3D" id="2.160.10.10">
    <property type="entry name" value="Hexapeptide repeat proteins"/>
    <property type="match status" value="1"/>
</dbReference>
<dbReference type="Gene3D" id="3.40.1390.10">
    <property type="entry name" value="MurE/MurF, N-terminal domain"/>
    <property type="match status" value="1"/>
</dbReference>
<dbReference type="HAMAP" id="MF_00523">
    <property type="entry name" value="LpxD"/>
    <property type="match status" value="1"/>
</dbReference>
<dbReference type="InterPro" id="IPR001451">
    <property type="entry name" value="Hexapep"/>
</dbReference>
<dbReference type="InterPro" id="IPR007691">
    <property type="entry name" value="LpxD"/>
</dbReference>
<dbReference type="InterPro" id="IPR011004">
    <property type="entry name" value="Trimer_LpxA-like_sf"/>
</dbReference>
<dbReference type="InterPro" id="IPR020573">
    <property type="entry name" value="UDP_GlcNAc_AcTrfase_non-rep"/>
</dbReference>
<dbReference type="NCBIfam" id="TIGR01853">
    <property type="entry name" value="lipid_A_lpxD"/>
    <property type="match status" value="1"/>
</dbReference>
<dbReference type="NCBIfam" id="NF002060">
    <property type="entry name" value="PRK00892.1"/>
    <property type="match status" value="1"/>
</dbReference>
<dbReference type="PANTHER" id="PTHR43378">
    <property type="entry name" value="UDP-3-O-ACYLGLUCOSAMINE N-ACYLTRANSFERASE"/>
    <property type="match status" value="1"/>
</dbReference>
<dbReference type="PANTHER" id="PTHR43378:SF2">
    <property type="entry name" value="UDP-3-O-ACYLGLUCOSAMINE N-ACYLTRANSFERASE 1, MITOCHONDRIAL-RELATED"/>
    <property type="match status" value="1"/>
</dbReference>
<dbReference type="Pfam" id="PF00132">
    <property type="entry name" value="Hexapep"/>
    <property type="match status" value="2"/>
</dbReference>
<dbReference type="Pfam" id="PF04613">
    <property type="entry name" value="LpxD"/>
    <property type="match status" value="1"/>
</dbReference>
<dbReference type="SUPFAM" id="SSF51161">
    <property type="entry name" value="Trimeric LpxA-like enzymes"/>
    <property type="match status" value="1"/>
</dbReference>
<dbReference type="PROSITE" id="PS00101">
    <property type="entry name" value="HEXAPEP_TRANSFERASES"/>
    <property type="match status" value="1"/>
</dbReference>
<organism>
    <name type="scientific">Prochlorococcus marinus (strain SARG / CCMP1375 / SS120)</name>
    <dbReference type="NCBI Taxonomy" id="167539"/>
    <lineage>
        <taxon>Bacteria</taxon>
        <taxon>Bacillati</taxon>
        <taxon>Cyanobacteriota</taxon>
        <taxon>Cyanophyceae</taxon>
        <taxon>Synechococcales</taxon>
        <taxon>Prochlorococcaceae</taxon>
        <taxon>Prochlorococcus</taxon>
    </lineage>
</organism>
<name>LPXD_PROMA</name>
<comment type="function">
    <text evidence="1">Catalyzes the N-acylation of UDP-3-O-acylglucosamine using 3-hydroxyacyl-ACP as the acyl donor. Is involved in the biosynthesis of lipid A, a phosphorylated glycolipid that anchors the lipopolysaccharide to the outer membrane of the cell.</text>
</comment>
<comment type="catalytic activity">
    <reaction evidence="1">
        <text>a UDP-3-O-[(3R)-3-hydroxyacyl]-alpha-D-glucosamine + a (3R)-hydroxyacyl-[ACP] = a UDP-2-N,3-O-bis[(3R)-3-hydroxyacyl]-alpha-D-glucosamine + holo-[ACP] + H(+)</text>
        <dbReference type="Rhea" id="RHEA:53836"/>
        <dbReference type="Rhea" id="RHEA-COMP:9685"/>
        <dbReference type="Rhea" id="RHEA-COMP:9945"/>
        <dbReference type="ChEBI" id="CHEBI:15378"/>
        <dbReference type="ChEBI" id="CHEBI:64479"/>
        <dbReference type="ChEBI" id="CHEBI:78827"/>
        <dbReference type="ChEBI" id="CHEBI:137740"/>
        <dbReference type="ChEBI" id="CHEBI:137748"/>
        <dbReference type="EC" id="2.3.1.191"/>
    </reaction>
</comment>
<comment type="pathway">
    <text evidence="1">Bacterial outer membrane biogenesis; LPS lipid A biosynthesis.</text>
</comment>
<comment type="subunit">
    <text evidence="1">Homotrimer.</text>
</comment>
<comment type="similarity">
    <text evidence="1">Belongs to the transferase hexapeptide repeat family. LpxD subfamily.</text>
</comment>
<sequence length="345" mass="36692">MEFSKLIEILNNGDSGLIDHNLSSNPEINSAASLEKAEVNQISFIENASYLFNEINQTKASALILGEKVDITEKLDLKNIAWVTVKNPRIAFAEILEEINPTKVFPESIHPSAVIGNNVKIGKNIYIGANVCIDSNTRIGDNSIIHSGVVIYENVVIGKNNELHANCVIHQYSNLGDNCIINSNAVIGSEGFGFIPTKRGWRKMPQTGKVILGDNVEIGSCSTVDRPAVGDTVIGSGTKIDNLVQVGHGVQIGNHCAMASQVGIAGGAKIGDGVILAGQVGVGNRVKVGSNVIASSKCGIHTDIEPEQVVSGFPAIPNKLWLRCAANFKKLPELAKVIKKLNGSV</sequence>
<gene>
    <name evidence="1" type="primary">lpxD</name>
    <name type="ordered locus">Pro_0863</name>
</gene>